<reference key="1">
    <citation type="journal article" date="1997" name="Nature">
        <title>The nucleotide sequence of Saccharomyces cerevisiae chromosome XIII.</title>
        <authorList>
            <person name="Bowman S."/>
            <person name="Churcher C.M."/>
            <person name="Badcock K."/>
            <person name="Brown D."/>
            <person name="Chillingworth T."/>
            <person name="Connor R."/>
            <person name="Dedman K."/>
            <person name="Devlin K."/>
            <person name="Gentles S."/>
            <person name="Hamlin N."/>
            <person name="Hunt S."/>
            <person name="Jagels K."/>
            <person name="Lye G."/>
            <person name="Moule S."/>
            <person name="Odell C."/>
            <person name="Pearson D."/>
            <person name="Rajandream M.A."/>
            <person name="Rice P."/>
            <person name="Skelton J."/>
            <person name="Walsh S.V."/>
            <person name="Whitehead S."/>
            <person name="Barrell B.G."/>
        </authorList>
    </citation>
    <scope>NUCLEOTIDE SEQUENCE [LARGE SCALE GENOMIC DNA]</scope>
    <source>
        <strain>ATCC 204508 / S288c</strain>
    </source>
</reference>
<reference key="2">
    <citation type="journal article" date="2014" name="G3 (Bethesda)">
        <title>The reference genome sequence of Saccharomyces cerevisiae: Then and now.</title>
        <authorList>
            <person name="Engel S.R."/>
            <person name="Dietrich F.S."/>
            <person name="Fisk D.G."/>
            <person name="Binkley G."/>
            <person name="Balakrishnan R."/>
            <person name="Costanzo M.C."/>
            <person name="Dwight S.S."/>
            <person name="Hitz B.C."/>
            <person name="Karra K."/>
            <person name="Nash R.S."/>
            <person name="Weng S."/>
            <person name="Wong E.D."/>
            <person name="Lloyd P."/>
            <person name="Skrzypek M.S."/>
            <person name="Miyasato S.R."/>
            <person name="Simison M."/>
            <person name="Cherry J.M."/>
        </authorList>
    </citation>
    <scope>GENOME REANNOTATION</scope>
    <source>
        <strain>ATCC 204508 / S288c</strain>
    </source>
</reference>
<reference key="3">
    <citation type="journal article" date="2003" name="Nature">
        <title>Global analysis of protein localization in budding yeast.</title>
        <authorList>
            <person name="Huh W.-K."/>
            <person name="Falvo J.V."/>
            <person name="Gerke L.C."/>
            <person name="Carroll A.S."/>
            <person name="Howson R.W."/>
            <person name="Weissman J.S."/>
            <person name="O'Shea E.K."/>
        </authorList>
    </citation>
    <scope>SUBCELLULAR LOCATION [LARGE SCALE ANALYSIS]</scope>
</reference>
<reference key="4">
    <citation type="journal article" date="2003" name="Nature">
        <title>Global analysis of protein expression in yeast.</title>
        <authorList>
            <person name="Ghaemmaghami S."/>
            <person name="Huh W.-K."/>
            <person name="Bower K."/>
            <person name="Howson R.W."/>
            <person name="Belle A."/>
            <person name="Dephoure N."/>
            <person name="O'Shea E.K."/>
            <person name="Weissman J.S."/>
        </authorList>
    </citation>
    <scope>LEVEL OF PROTEIN EXPRESSION [LARGE SCALE ANALYSIS]</scope>
</reference>
<reference key="5">
    <citation type="journal article" date="2010" name="Mol. Biosyst.">
        <title>Genome-wide analysis of eukaryotic twin CX9C proteins.</title>
        <authorList>
            <person name="Cavallaro G."/>
        </authorList>
    </citation>
    <scope>DOMAIN</scope>
</reference>
<reference key="6">
    <citation type="journal article" date="2012" name="Mol. Cell. Proteomics">
        <title>Intermembrane space proteome of yeast mitochondria.</title>
        <authorList>
            <person name="Voegtle F.N."/>
            <person name="Burkhart J.M."/>
            <person name="Rao S."/>
            <person name="Gerbeth C."/>
            <person name="Hinrichs J."/>
            <person name="Martinou J.C."/>
            <person name="Chacinska A."/>
            <person name="Sickmann A."/>
            <person name="Zahedi R.P."/>
            <person name="Meisinger C."/>
        </authorList>
    </citation>
    <scope>FUNCTION</scope>
    <scope>IDENTIFICATION BY MASS SPECTROMETRY</scope>
    <scope>SUBCELLULAR LOCATION [LARGE SCALE ANALYSIS]</scope>
</reference>
<reference key="7">
    <citation type="journal article" date="2012" name="Proc. Natl. Acad. Sci. U.S.A.">
        <title>N-terminal acetylome analyses and functional insights of the N-terminal acetyltransferase NatB.</title>
        <authorList>
            <person name="Van Damme P."/>
            <person name="Lasa M."/>
            <person name="Polevoda B."/>
            <person name="Gazquez C."/>
            <person name="Elosegui-Artola A."/>
            <person name="Kim D.S."/>
            <person name="De Juan-Pardo E."/>
            <person name="Demeyer K."/>
            <person name="Hole K."/>
            <person name="Larrea E."/>
            <person name="Timmerman E."/>
            <person name="Prieto J."/>
            <person name="Arnesen T."/>
            <person name="Sherman F."/>
            <person name="Gevaert K."/>
            <person name="Aldabe R."/>
        </authorList>
    </citation>
    <scope>IDENTIFICATION BY MASS SPECTROMETRY [LARGE SCALE ANALYSIS]</scope>
</reference>
<reference key="8">
    <citation type="journal article" date="2014" name="Hum. Mol. Genet.">
        <title>Copper supplementation restores cytochrome c oxidase assembly defect in a mitochondrial disease model of COA6 deficiency.</title>
        <authorList>
            <person name="Ghosh A."/>
            <person name="Trivedi P.P."/>
            <person name="Timbalia S.A."/>
            <person name="Griffin A.T."/>
            <person name="Rahn J.J."/>
            <person name="Chan S.S."/>
            <person name="Gohil V.M."/>
        </authorList>
    </citation>
    <scope>FUNCTION</scope>
    <scope>MUTAGENESIS OF CYS-25; TRP-26; CYS-35; CYS-57 AND CYS-68</scope>
</reference>
<reference key="9">
    <citation type="journal article" date="2015" name="Cell Metab.">
        <title>Cooperation between COA6 and SCO2 in COX2 maturation during cytochrome c oxidase assembly links two mitochondrial cardiomyopathies.</title>
        <authorList>
            <person name="Pacheu-Grau D."/>
            <person name="Bareth B."/>
            <person name="Dudek J."/>
            <person name="Juris L."/>
            <person name="Voegtle F.N."/>
            <person name="Wissel M."/>
            <person name="Leary S.C."/>
            <person name="Dennerlein S."/>
            <person name="Rehling P."/>
            <person name="Deckers M."/>
        </authorList>
    </citation>
    <scope>FUNCTION</scope>
    <scope>INTERACTION WITH COX2</scope>
</reference>
<feature type="chain" id="PRO_0000247793" description="Cytochrome c oxidase assembly factor 6">
    <location>
        <begin position="1"/>
        <end position="104"/>
    </location>
</feature>
<feature type="domain" description="CHCH" evidence="1">
    <location>
        <begin position="22"/>
        <end position="76"/>
    </location>
</feature>
<feature type="region of interest" description="Disordered" evidence="2">
    <location>
        <begin position="1"/>
        <end position="22"/>
    </location>
</feature>
<feature type="short sequence motif" description="Cx9C motif" evidence="1">
    <location>
        <begin position="25"/>
        <end position="35"/>
    </location>
</feature>
<feature type="short sequence motif" description="Cx10C motif" evidence="1">
    <location>
        <begin position="57"/>
        <end position="68"/>
    </location>
</feature>
<feature type="disulfide bond" evidence="1 10">
    <location>
        <begin position="25"/>
        <end position="68"/>
    </location>
</feature>
<feature type="disulfide bond" evidence="1 10">
    <location>
        <begin position="35"/>
        <end position="57"/>
    </location>
</feature>
<feature type="mutagenesis site" description="Loss of function. Localizes correctly to the mitochondrion, but reduces the steady-state level of the protein in the mitochondrial fraction." evidence="6">
    <original>C</original>
    <variation>A</variation>
    <location>
        <position position="25"/>
    </location>
</feature>
<feature type="mutagenesis site" description="Loss of function. Localizes correctly to the mitochondrion, but severely reduces the steady-state level of the protein in the mitochondrial fraction.">
    <original>W</original>
    <variation>C</variation>
    <location>
        <position position="26"/>
    </location>
</feature>
<feature type="mutagenesis site" description="Loss of function. Localizes correctly to the mitochondrion, but reduces the steady-state level of the protein in the mitochondrial fraction.">
    <original>C</original>
    <variation>A</variation>
    <location>
        <position position="35"/>
    </location>
</feature>
<feature type="mutagenesis site" description="Loss of function. Localizes correctly to the mitochondrion, but reduces the steady-state level of the protein in the mitochondrial fraction.">
    <original>C</original>
    <variation>A</variation>
    <location>
        <position position="57"/>
    </location>
</feature>
<feature type="mutagenesis site" description="Loss of function. Localizes correctly to the mitochondrion, but severely reduces the steady-state level of the protein in the mitochondrial fraction.">
    <original>C</original>
    <variation>A</variation>
    <location>
        <position position="68"/>
    </location>
</feature>
<organism>
    <name type="scientific">Saccharomyces cerevisiae (strain ATCC 204508 / S288c)</name>
    <name type="common">Baker's yeast</name>
    <dbReference type="NCBI Taxonomy" id="559292"/>
    <lineage>
        <taxon>Eukaryota</taxon>
        <taxon>Fungi</taxon>
        <taxon>Dikarya</taxon>
        <taxon>Ascomycota</taxon>
        <taxon>Saccharomycotina</taxon>
        <taxon>Saccharomycetes</taxon>
        <taxon>Saccharomycetales</taxon>
        <taxon>Saccharomycetaceae</taxon>
        <taxon>Saccharomyces</taxon>
    </lineage>
</organism>
<accession>Q3E846</accession>
<accession>D6W072</accession>
<name>COA6_YEAST</name>
<dbReference type="EMBL" id="Z48756">
    <property type="status" value="NOT_ANNOTATED_CDS"/>
    <property type="molecule type" value="Genomic_DNA"/>
</dbReference>
<dbReference type="EMBL" id="BK006946">
    <property type="protein sequence ID" value="DAA10146.1"/>
    <property type="molecule type" value="Genomic_DNA"/>
</dbReference>
<dbReference type="RefSeq" id="NP_013972.1">
    <property type="nucleotide sequence ID" value="NM_001182751.1"/>
</dbReference>
<dbReference type="SMR" id="Q3E846"/>
<dbReference type="BioGRID" id="35424">
    <property type="interactions" value="77"/>
</dbReference>
<dbReference type="FunCoup" id="Q3E846">
    <property type="interactions" value="230"/>
</dbReference>
<dbReference type="STRING" id="4932.YMR244C-A"/>
<dbReference type="PaxDb" id="4932-YMR244C-A"/>
<dbReference type="PeptideAtlas" id="Q3E846"/>
<dbReference type="EnsemblFungi" id="YMR244C-A_mRNA">
    <property type="protein sequence ID" value="YMR244C-A"/>
    <property type="gene ID" value="YMR244C-A"/>
</dbReference>
<dbReference type="GeneID" id="855287"/>
<dbReference type="KEGG" id="sce:YMR244C-A"/>
<dbReference type="AGR" id="SGD:S000004857"/>
<dbReference type="SGD" id="S000004857">
    <property type="gene designation" value="COA6"/>
</dbReference>
<dbReference type="VEuPathDB" id="FungiDB:YMR244C-A"/>
<dbReference type="eggNOG" id="ENOG502S7HF">
    <property type="taxonomic scope" value="Eukaryota"/>
</dbReference>
<dbReference type="HOGENOM" id="CLU_142408_0_0_1"/>
<dbReference type="InParanoid" id="Q3E846"/>
<dbReference type="OMA" id="CAKAWVK"/>
<dbReference type="OrthoDB" id="5545577at2759"/>
<dbReference type="BioCyc" id="YEAST:G3O-32924-MONOMER"/>
<dbReference type="BioGRID-ORCS" id="855287">
    <property type="hits" value="3 hits in 10 CRISPR screens"/>
</dbReference>
<dbReference type="PRO" id="PR:Q3E846"/>
<dbReference type="Proteomes" id="UP000002311">
    <property type="component" value="Chromosome XIII"/>
</dbReference>
<dbReference type="RNAct" id="Q3E846">
    <property type="molecule type" value="protein"/>
</dbReference>
<dbReference type="GO" id="GO:0005737">
    <property type="term" value="C:cytoplasm"/>
    <property type="evidence" value="ECO:0007005"/>
    <property type="project" value="SGD"/>
</dbReference>
<dbReference type="GO" id="GO:0005758">
    <property type="term" value="C:mitochondrial intermembrane space"/>
    <property type="evidence" value="ECO:0000314"/>
    <property type="project" value="SGD"/>
</dbReference>
<dbReference type="GO" id="GO:0005739">
    <property type="term" value="C:mitochondrion"/>
    <property type="evidence" value="ECO:0007005"/>
    <property type="project" value="SGD"/>
</dbReference>
<dbReference type="GO" id="GO:0005634">
    <property type="term" value="C:nucleus"/>
    <property type="evidence" value="ECO:0007005"/>
    <property type="project" value="SGD"/>
</dbReference>
<dbReference type="GO" id="GO:0005507">
    <property type="term" value="F:copper ion binding"/>
    <property type="evidence" value="ECO:0000314"/>
    <property type="project" value="SGD"/>
</dbReference>
<dbReference type="GO" id="GO:0006878">
    <property type="term" value="P:intracellular copper ion homeostasis"/>
    <property type="evidence" value="ECO:0000315"/>
    <property type="project" value="SGD"/>
</dbReference>
<dbReference type="GO" id="GO:0033617">
    <property type="term" value="P:mitochondrial cytochrome c oxidase assembly"/>
    <property type="evidence" value="ECO:0000315"/>
    <property type="project" value="SGD"/>
</dbReference>
<dbReference type="GO" id="GO:0008535">
    <property type="term" value="P:respiratory chain complex IV assembly"/>
    <property type="evidence" value="ECO:0000314"/>
    <property type="project" value="UniProtKB"/>
</dbReference>
<dbReference type="FunFam" id="1.10.10.140:FF:000003">
    <property type="entry name" value="Cytochrome c oxidase assembly factor 6"/>
    <property type="match status" value="1"/>
</dbReference>
<dbReference type="Gene3D" id="1.10.10.140">
    <property type="entry name" value="Cytochrome c oxidase, subunit VIb"/>
    <property type="match status" value="1"/>
</dbReference>
<dbReference type="InterPro" id="IPR048281">
    <property type="entry name" value="COA6_fun"/>
</dbReference>
<dbReference type="InterPro" id="IPR048280">
    <property type="entry name" value="COX6B-like"/>
</dbReference>
<dbReference type="InterPro" id="IPR036549">
    <property type="entry name" value="CX6/COA6-like_sf"/>
</dbReference>
<dbReference type="PANTHER" id="PTHR47677">
    <property type="entry name" value="CYTOCHROME C OXIDASE ASSEMBLY FACTOR 6"/>
    <property type="match status" value="1"/>
</dbReference>
<dbReference type="PANTHER" id="PTHR47677:SF1">
    <property type="entry name" value="CYTOCHROME C OXIDASE ASSEMBLY FACTOR 6"/>
    <property type="match status" value="1"/>
</dbReference>
<dbReference type="Pfam" id="PF02297">
    <property type="entry name" value="COX6B"/>
    <property type="match status" value="1"/>
</dbReference>
<dbReference type="SUPFAM" id="SSF47694">
    <property type="entry name" value="Cytochrome c oxidase subunit h"/>
    <property type="match status" value="1"/>
</dbReference>
<dbReference type="PROSITE" id="PS51808">
    <property type="entry name" value="CHCH"/>
    <property type="match status" value="1"/>
</dbReference>
<comment type="function">
    <text evidence="5 6">Involved in the maturation of the mitochondrial respiratory chain complex IV subunit MT-CO2/COX2. Thereby, may regulate early steps of complex IV assembly. Mitochondrial respiratory chain complex IV or cytochrome c oxidase is the component of the respiratory chain that catalyzes the transfer of electrons from intermembrane space cytochrome c to molecular oxygen in the matrix and as a consequence contributes to the proton gradient involved in mitochondrial ATP synthesis. May also be required for efficient formation of respiratory supercomplexes comprised of complexes III and IV.</text>
</comment>
<comment type="subunit">
    <text evidence="7">Interacts with COX2.</text>
</comment>
<comment type="subcellular location">
    <subcellularLocation>
        <location evidence="3">Cytoplasm</location>
    </subcellularLocation>
    <subcellularLocation>
        <location evidence="3">Nucleus</location>
    </subcellularLocation>
    <subcellularLocation>
        <location evidence="5">Mitochondrion intermembrane space</location>
    </subcellularLocation>
    <text evidence="5">Imported into the mitochondria via the mitochondrial MIA40-ERV1 machinery.</text>
</comment>
<comment type="domain">
    <text evidence="10">The Cx9C/Cx10C motifs are involved in the recognition by the mitochondrial MIA40-ERV1 disulfide relay system and the subsequent transfer of disulfide bonds by dithiol/disulfide exchange reactions to the newly imported protein.</text>
</comment>
<comment type="miscellaneous">
    <text evidence="4">Present with 721 molecules/cell in log phase SD medium.</text>
</comment>
<comment type="similarity">
    <text evidence="9">Belongs to the cytochrome c oxidase subunit 6B family.</text>
</comment>
<sequence length="104" mass="12445">MGLFSFDGGKKESQPPNTRSQRKLCWESRDAFFQCLDKADILDAMDPKNSKSIKSHCKVENEKFEENCAHSWIKYFKEKRVIDFKREQTIKRIEQEAKQRERNQ</sequence>
<gene>
    <name evidence="8" type="primary">COA6</name>
    <name evidence="11" type="ordered locus">YMR244C-A</name>
</gene>
<proteinExistence type="evidence at protein level"/>
<evidence type="ECO:0000255" key="1">
    <source>
        <dbReference type="PROSITE-ProRule" id="PRU01150"/>
    </source>
</evidence>
<evidence type="ECO:0000256" key="2">
    <source>
        <dbReference type="SAM" id="MobiDB-lite"/>
    </source>
</evidence>
<evidence type="ECO:0000269" key="3">
    <source>
    </source>
</evidence>
<evidence type="ECO:0000269" key="4">
    <source>
    </source>
</evidence>
<evidence type="ECO:0000269" key="5">
    <source>
    </source>
</evidence>
<evidence type="ECO:0000269" key="6">
    <source>
    </source>
</evidence>
<evidence type="ECO:0000269" key="7">
    <source>
    </source>
</evidence>
<evidence type="ECO:0000303" key="8">
    <source>
    </source>
</evidence>
<evidence type="ECO:0000305" key="9"/>
<evidence type="ECO:0000305" key="10">
    <source>
    </source>
</evidence>
<evidence type="ECO:0000312" key="11">
    <source>
        <dbReference type="SGD" id="S000004857"/>
    </source>
</evidence>
<keyword id="KW-0963">Cytoplasm</keyword>
<keyword id="KW-1015">Disulfide bond</keyword>
<keyword id="KW-0496">Mitochondrion</keyword>
<keyword id="KW-0539">Nucleus</keyword>
<keyword id="KW-1185">Reference proteome</keyword>
<protein>
    <recommendedName>
        <fullName evidence="8">Cytochrome c oxidase assembly factor 6</fullName>
    </recommendedName>
</protein>